<proteinExistence type="evidence at protein level"/>
<dbReference type="EC" id="3.1.3.77" evidence="1"/>
<dbReference type="EMBL" id="AF113125">
    <property type="protein sequence ID" value="AAF14866.1"/>
    <property type="molecule type" value="mRNA"/>
</dbReference>
<dbReference type="EMBL" id="AK022656">
    <property type="protein sequence ID" value="BAB14160.1"/>
    <property type="molecule type" value="mRNA"/>
</dbReference>
<dbReference type="EMBL" id="CR457141">
    <property type="protein sequence ID" value="CAG33422.1"/>
    <property type="molecule type" value="mRNA"/>
</dbReference>
<dbReference type="EMBL" id="BC001317">
    <property type="protein sequence ID" value="AAH01317.1"/>
    <property type="molecule type" value="mRNA"/>
</dbReference>
<dbReference type="EMBL" id="BC065815">
    <property type="protein sequence ID" value="AAH65815.1"/>
    <property type="molecule type" value="mRNA"/>
</dbReference>
<dbReference type="EMBL" id="AF177286">
    <property type="protein sequence ID" value="AAQ13671.1"/>
    <property type="status" value="ALT_SEQ"/>
    <property type="molecule type" value="mRNA"/>
</dbReference>
<dbReference type="CCDS" id="CCDS3594.1">
    <molecule id="Q9UHY7-1"/>
</dbReference>
<dbReference type="RefSeq" id="NP_001278946.1">
    <property type="nucleotide sequence ID" value="NM_001292017.1"/>
</dbReference>
<dbReference type="RefSeq" id="NP_067027.1">
    <molecule id="Q9UHY7-1"/>
    <property type="nucleotide sequence ID" value="NM_021204.5"/>
</dbReference>
<dbReference type="PDB" id="1YNS">
    <property type="method" value="X-ray"/>
    <property type="resolution" value="1.70 A"/>
    <property type="chains" value="A=1-261"/>
</dbReference>
<dbReference type="PDB" id="1ZS9">
    <property type="method" value="X-ray"/>
    <property type="resolution" value="1.70 A"/>
    <property type="chains" value="A=1-261"/>
</dbReference>
<dbReference type="PDBsum" id="1YNS"/>
<dbReference type="PDBsum" id="1ZS9"/>
<dbReference type="SMR" id="Q9UHY7"/>
<dbReference type="BioGRID" id="121811">
    <property type="interactions" value="40"/>
</dbReference>
<dbReference type="FunCoup" id="Q9UHY7">
    <property type="interactions" value="2171"/>
</dbReference>
<dbReference type="IntAct" id="Q9UHY7">
    <property type="interactions" value="18"/>
</dbReference>
<dbReference type="MINT" id="Q9UHY7"/>
<dbReference type="STRING" id="9606.ENSP00000273920"/>
<dbReference type="DrugBank" id="DB07912">
    <property type="generic name" value="2-OXOHEPTYLPHOSPHONIC ACID"/>
</dbReference>
<dbReference type="DrugBank" id="DB09325">
    <property type="generic name" value="Sodium fluoride"/>
</dbReference>
<dbReference type="DEPOD" id="ENOPH1"/>
<dbReference type="GlyGen" id="Q9UHY7">
    <property type="glycosylation" value="1 site, 1 O-linked glycan (1 site)"/>
</dbReference>
<dbReference type="iPTMnet" id="Q9UHY7"/>
<dbReference type="PhosphoSitePlus" id="Q9UHY7"/>
<dbReference type="SwissPalm" id="Q9UHY7"/>
<dbReference type="BioMuta" id="ENOPH1"/>
<dbReference type="DMDM" id="74735024"/>
<dbReference type="jPOST" id="Q9UHY7"/>
<dbReference type="MassIVE" id="Q9UHY7"/>
<dbReference type="PaxDb" id="9606-ENSP00000273920"/>
<dbReference type="PeptideAtlas" id="Q9UHY7"/>
<dbReference type="ProteomicsDB" id="84440">
    <molecule id="Q9UHY7-1"/>
</dbReference>
<dbReference type="ProteomicsDB" id="84441">
    <molecule id="Q9UHY7-2"/>
</dbReference>
<dbReference type="Pumba" id="Q9UHY7"/>
<dbReference type="Antibodypedia" id="25049">
    <property type="antibodies" value="177 antibodies from 24 providers"/>
</dbReference>
<dbReference type="DNASU" id="58478"/>
<dbReference type="Ensembl" id="ENST00000273920.8">
    <molecule id="Q9UHY7-1"/>
    <property type="protein sequence ID" value="ENSP00000273920.3"/>
    <property type="gene ID" value="ENSG00000145293.17"/>
</dbReference>
<dbReference type="Ensembl" id="ENST00000505846.5">
    <molecule id="Q9UHY7-2"/>
    <property type="protein sequence ID" value="ENSP00000427209.1"/>
    <property type="gene ID" value="ENSG00000145293.17"/>
</dbReference>
<dbReference type="GeneID" id="58478"/>
<dbReference type="KEGG" id="hsa:58478"/>
<dbReference type="MANE-Select" id="ENST00000273920.8">
    <property type="protein sequence ID" value="ENSP00000273920.3"/>
    <property type="RefSeq nucleotide sequence ID" value="NM_021204.5"/>
    <property type="RefSeq protein sequence ID" value="NP_067027.1"/>
</dbReference>
<dbReference type="UCSC" id="uc003hmv.4">
    <molecule id="Q9UHY7-1"/>
    <property type="organism name" value="human"/>
</dbReference>
<dbReference type="AGR" id="HGNC:24599"/>
<dbReference type="CTD" id="58478"/>
<dbReference type="DisGeNET" id="58478"/>
<dbReference type="GeneCards" id="ENOPH1"/>
<dbReference type="HGNC" id="HGNC:24599">
    <property type="gene designation" value="ENOPH1"/>
</dbReference>
<dbReference type="HPA" id="ENSG00000145293">
    <property type="expression patterns" value="Tissue enhanced (brain)"/>
</dbReference>
<dbReference type="neXtProt" id="NX_Q9UHY7"/>
<dbReference type="OpenTargets" id="ENSG00000145293"/>
<dbReference type="PharmGKB" id="PA162385052"/>
<dbReference type="VEuPathDB" id="HostDB:ENSG00000145293"/>
<dbReference type="eggNOG" id="KOG2630">
    <property type="taxonomic scope" value="Eukaryota"/>
</dbReference>
<dbReference type="GeneTree" id="ENSGT00440000039914"/>
<dbReference type="HOGENOM" id="CLU_023273_0_0_1"/>
<dbReference type="InParanoid" id="Q9UHY7"/>
<dbReference type="OMA" id="LQGMVWE"/>
<dbReference type="OrthoDB" id="272500at2759"/>
<dbReference type="PAN-GO" id="Q9UHY7">
    <property type="GO annotations" value="2 GO annotations based on evolutionary models"/>
</dbReference>
<dbReference type="PhylomeDB" id="Q9UHY7"/>
<dbReference type="TreeFam" id="TF105939"/>
<dbReference type="BRENDA" id="3.1.3.77">
    <property type="organism ID" value="2681"/>
</dbReference>
<dbReference type="PathwayCommons" id="Q9UHY7"/>
<dbReference type="Reactome" id="R-HSA-1237112">
    <property type="pathway name" value="Methionine salvage pathway"/>
</dbReference>
<dbReference type="SignaLink" id="Q9UHY7"/>
<dbReference type="UniPathway" id="UPA00904">
    <property type="reaction ID" value="UER00876"/>
</dbReference>
<dbReference type="UniPathway" id="UPA00904">
    <property type="reaction ID" value="UER00877"/>
</dbReference>
<dbReference type="BioGRID-ORCS" id="58478">
    <property type="hits" value="18 hits in 1180 CRISPR screens"/>
</dbReference>
<dbReference type="ChiTaRS" id="ENOPH1">
    <property type="organism name" value="human"/>
</dbReference>
<dbReference type="EvolutionaryTrace" id="Q9UHY7"/>
<dbReference type="GenomeRNAi" id="58478"/>
<dbReference type="Pharos" id="Q9UHY7">
    <property type="development level" value="Tbio"/>
</dbReference>
<dbReference type="PRO" id="PR:Q9UHY7"/>
<dbReference type="Proteomes" id="UP000005640">
    <property type="component" value="Chromosome 4"/>
</dbReference>
<dbReference type="RNAct" id="Q9UHY7">
    <property type="molecule type" value="protein"/>
</dbReference>
<dbReference type="Bgee" id="ENSG00000145293">
    <property type="expression patterns" value="Expressed in C1 segment of cervical spinal cord and 207 other cell types or tissues"/>
</dbReference>
<dbReference type="ExpressionAtlas" id="Q9UHY7">
    <property type="expression patterns" value="baseline and differential"/>
</dbReference>
<dbReference type="GO" id="GO:0005829">
    <property type="term" value="C:cytosol"/>
    <property type="evidence" value="ECO:0000304"/>
    <property type="project" value="Reactome"/>
</dbReference>
<dbReference type="GO" id="GO:0005634">
    <property type="term" value="C:nucleus"/>
    <property type="evidence" value="ECO:0007669"/>
    <property type="project" value="UniProtKB-SubCell"/>
</dbReference>
<dbReference type="GO" id="GO:0043874">
    <property type="term" value="F:acireductone synthase activity"/>
    <property type="evidence" value="ECO:0000314"/>
    <property type="project" value="UniProtKB"/>
</dbReference>
<dbReference type="GO" id="GO:0000287">
    <property type="term" value="F:magnesium ion binding"/>
    <property type="evidence" value="ECO:0007669"/>
    <property type="project" value="UniProtKB-UniRule"/>
</dbReference>
<dbReference type="GO" id="GO:0019509">
    <property type="term" value="P:L-methionine salvage from methylthioadenosine"/>
    <property type="evidence" value="ECO:0000314"/>
    <property type="project" value="UniProtKB"/>
</dbReference>
<dbReference type="CDD" id="cd01629">
    <property type="entry name" value="HAD_EP"/>
    <property type="match status" value="1"/>
</dbReference>
<dbReference type="FunFam" id="1.10.720.60:FF:000002">
    <property type="entry name" value="Enolase-phosphatase E1"/>
    <property type="match status" value="1"/>
</dbReference>
<dbReference type="FunFam" id="3.40.50.1000:FF:000102">
    <property type="entry name" value="Enolase-phosphatase E1"/>
    <property type="match status" value="1"/>
</dbReference>
<dbReference type="Gene3D" id="1.10.720.60">
    <property type="match status" value="1"/>
</dbReference>
<dbReference type="Gene3D" id="3.40.50.1000">
    <property type="entry name" value="HAD superfamily/HAD-like"/>
    <property type="match status" value="1"/>
</dbReference>
<dbReference type="HAMAP" id="MF_01681">
    <property type="entry name" value="Salvage_MtnC"/>
    <property type="match status" value="1"/>
</dbReference>
<dbReference type="HAMAP" id="MF_03117">
    <property type="entry name" value="Salvage_MtnC_euk"/>
    <property type="match status" value="1"/>
</dbReference>
<dbReference type="InterPro" id="IPR023943">
    <property type="entry name" value="Enolase-ppase_E1"/>
</dbReference>
<dbReference type="InterPro" id="IPR027511">
    <property type="entry name" value="ENOPH1_eukaryotes"/>
</dbReference>
<dbReference type="InterPro" id="IPR036412">
    <property type="entry name" value="HAD-like_sf"/>
</dbReference>
<dbReference type="InterPro" id="IPR006439">
    <property type="entry name" value="HAD-SF_hydro_IA"/>
</dbReference>
<dbReference type="InterPro" id="IPR023214">
    <property type="entry name" value="HAD_sf"/>
</dbReference>
<dbReference type="NCBIfam" id="TIGR01691">
    <property type="entry name" value="enolase-ppase"/>
    <property type="match status" value="1"/>
</dbReference>
<dbReference type="NCBIfam" id="TIGR01549">
    <property type="entry name" value="HAD-SF-IA-v1"/>
    <property type="match status" value="1"/>
</dbReference>
<dbReference type="PANTHER" id="PTHR20371">
    <property type="entry name" value="ENOLASE-PHOSPHATASE E1"/>
    <property type="match status" value="1"/>
</dbReference>
<dbReference type="PANTHER" id="PTHR20371:SF1">
    <property type="entry name" value="ENOLASE-PHOSPHATASE E1"/>
    <property type="match status" value="1"/>
</dbReference>
<dbReference type="Pfam" id="PF00702">
    <property type="entry name" value="Hydrolase"/>
    <property type="match status" value="1"/>
</dbReference>
<dbReference type="SFLD" id="SFLDF00044">
    <property type="entry name" value="enolase-phosphatase"/>
    <property type="match status" value="1"/>
</dbReference>
<dbReference type="SFLD" id="SFLDS00003">
    <property type="entry name" value="Haloacid_Dehalogenase"/>
    <property type="match status" value="1"/>
</dbReference>
<dbReference type="SUPFAM" id="SSF56784">
    <property type="entry name" value="HAD-like"/>
    <property type="match status" value="1"/>
</dbReference>
<protein>
    <recommendedName>
        <fullName evidence="1">Enolase-phosphatase E1</fullName>
        <ecNumber evidence="1">3.1.3.77</ecNumber>
    </recommendedName>
    <alternativeName>
        <fullName evidence="1">2,3-diketo-5-methylthio-1-phosphopentane phosphatase</fullName>
    </alternativeName>
    <alternativeName>
        <fullName evidence="1">MASA homolog</fullName>
    </alternativeName>
</protein>
<feature type="chain" id="PRO_0000254007" description="Enolase-phosphatase E1">
    <location>
        <begin position="1"/>
        <end position="261"/>
    </location>
</feature>
<feature type="binding site" evidence="1 2">
    <location>
        <position position="16"/>
    </location>
    <ligand>
        <name>Mg(2+)</name>
        <dbReference type="ChEBI" id="CHEBI:18420"/>
    </ligand>
</feature>
<feature type="binding site" evidence="1 2">
    <location>
        <position position="18"/>
    </location>
    <ligand>
        <name>Mg(2+)</name>
        <dbReference type="ChEBI" id="CHEBI:18420"/>
    </ligand>
</feature>
<feature type="binding site">
    <location>
        <begin position="153"/>
        <end position="154"/>
    </location>
    <ligand>
        <name>substrate</name>
    </ligand>
</feature>
<feature type="binding site">
    <location>
        <position position="187"/>
    </location>
    <ligand>
        <name>substrate</name>
    </ligand>
</feature>
<feature type="binding site" evidence="1 2">
    <location>
        <position position="212"/>
    </location>
    <ligand>
        <name>Mg(2+)</name>
        <dbReference type="ChEBI" id="CHEBI:18420"/>
    </ligand>
</feature>
<feature type="splice variant" id="VSP_021160" description="In isoform 2." evidence="3">
    <location>
        <begin position="1"/>
        <end position="146"/>
    </location>
</feature>
<feature type="strand" evidence="5">
    <location>
        <begin position="12"/>
        <end position="15"/>
    </location>
</feature>
<feature type="turn" evidence="5">
    <location>
        <begin position="19"/>
        <end position="21"/>
    </location>
</feature>
<feature type="helix" evidence="5">
    <location>
        <begin position="24"/>
        <end position="29"/>
    </location>
</feature>
<feature type="helix" evidence="5">
    <location>
        <begin position="31"/>
        <end position="46"/>
    </location>
</feature>
<feature type="helix" evidence="5">
    <location>
        <begin position="50"/>
        <end position="65"/>
    </location>
</feature>
<feature type="turn" evidence="5">
    <location>
        <begin position="66"/>
        <end position="68"/>
    </location>
</feature>
<feature type="helix" evidence="5">
    <location>
        <begin position="83"/>
        <end position="103"/>
    </location>
</feature>
<feature type="helix" evidence="5">
    <location>
        <begin position="108"/>
        <end position="123"/>
    </location>
</feature>
<feature type="helix" evidence="5">
    <location>
        <begin position="135"/>
        <end position="144"/>
    </location>
</feature>
<feature type="strand" evidence="5">
    <location>
        <begin position="148"/>
        <end position="152"/>
    </location>
</feature>
<feature type="helix" evidence="5">
    <location>
        <begin position="157"/>
        <end position="165"/>
    </location>
</feature>
<feature type="helix" evidence="5">
    <location>
        <begin position="173"/>
        <end position="175"/>
    </location>
</feature>
<feature type="strand" evidence="5">
    <location>
        <begin position="177"/>
        <end position="180"/>
    </location>
</feature>
<feature type="helix" evidence="5">
    <location>
        <begin position="182"/>
        <end position="184"/>
    </location>
</feature>
<feature type="helix" evidence="5">
    <location>
        <begin position="190"/>
        <end position="200"/>
    </location>
</feature>
<feature type="helix" evidence="5">
    <location>
        <begin position="204"/>
        <end position="206"/>
    </location>
</feature>
<feature type="strand" evidence="5">
    <location>
        <begin position="207"/>
        <end position="212"/>
    </location>
</feature>
<feature type="helix" evidence="5">
    <location>
        <begin position="214"/>
        <end position="222"/>
    </location>
</feature>
<feature type="strand" evidence="5">
    <location>
        <begin position="226"/>
        <end position="230"/>
    </location>
</feature>
<feature type="helix" evidence="5">
    <location>
        <begin position="240"/>
        <end position="245"/>
    </location>
</feature>
<feature type="strand" evidence="5">
    <location>
        <begin position="248"/>
        <end position="251"/>
    </location>
</feature>
<feature type="helix" evidence="5">
    <location>
        <begin position="252"/>
        <end position="254"/>
    </location>
</feature>
<keyword id="KW-0002">3D-structure</keyword>
<keyword id="KW-0025">Alternative splicing</keyword>
<keyword id="KW-0028">Amino-acid biosynthesis</keyword>
<keyword id="KW-0963">Cytoplasm</keyword>
<keyword id="KW-0378">Hydrolase</keyword>
<keyword id="KW-0460">Magnesium</keyword>
<keyword id="KW-0479">Metal-binding</keyword>
<keyword id="KW-0486">Methionine biosynthesis</keyword>
<keyword id="KW-0539">Nucleus</keyword>
<keyword id="KW-1267">Proteomics identification</keyword>
<keyword id="KW-1185">Reference proteome</keyword>
<name>ENOPH_HUMAN</name>
<gene>
    <name evidence="1" type="primary">ENOPH1</name>
    <name evidence="1" type="synonym">MASA</name>
    <name type="ORF">MSTP145</name>
</gene>
<evidence type="ECO:0000255" key="1">
    <source>
        <dbReference type="HAMAP-Rule" id="MF_03117"/>
    </source>
</evidence>
<evidence type="ECO:0000269" key="2">
    <source>
    </source>
</evidence>
<evidence type="ECO:0000303" key="3">
    <source>
    </source>
</evidence>
<evidence type="ECO:0000305" key="4"/>
<evidence type="ECO:0007829" key="5">
    <source>
        <dbReference type="PDB" id="1YNS"/>
    </source>
</evidence>
<organism>
    <name type="scientific">Homo sapiens</name>
    <name type="common">Human</name>
    <dbReference type="NCBI Taxonomy" id="9606"/>
    <lineage>
        <taxon>Eukaryota</taxon>
        <taxon>Metazoa</taxon>
        <taxon>Chordata</taxon>
        <taxon>Craniata</taxon>
        <taxon>Vertebrata</taxon>
        <taxon>Euteleostomi</taxon>
        <taxon>Mammalia</taxon>
        <taxon>Eutheria</taxon>
        <taxon>Euarchontoglires</taxon>
        <taxon>Primates</taxon>
        <taxon>Haplorrhini</taxon>
        <taxon>Catarrhini</taxon>
        <taxon>Hominidae</taxon>
        <taxon>Homo</taxon>
    </lineage>
</organism>
<reference key="1">
    <citation type="journal article" date="2000" name="Proc. Natl. Acad. Sci. U.S.A.">
        <title>Gene expression profiling in the human hypothalamus-pituitary-adrenal axis and full-length cDNA cloning.</title>
        <authorList>
            <person name="Hu R.-M."/>
            <person name="Han Z.-G."/>
            <person name="Song H.-D."/>
            <person name="Peng Y.-D."/>
            <person name="Huang Q.-H."/>
            <person name="Ren S.-X."/>
            <person name="Gu Y.-J."/>
            <person name="Huang C.-H."/>
            <person name="Li Y.-B."/>
            <person name="Jiang C.-L."/>
            <person name="Fu G."/>
            <person name="Zhang Q.-H."/>
            <person name="Gu B.-W."/>
            <person name="Dai M."/>
            <person name="Mao Y.-F."/>
            <person name="Gao G.-F."/>
            <person name="Rong R."/>
            <person name="Ye M."/>
            <person name="Zhou J."/>
            <person name="Xu S.-H."/>
            <person name="Gu J."/>
            <person name="Shi J.-X."/>
            <person name="Jin W.-R."/>
            <person name="Zhang C.-K."/>
            <person name="Wu T.-M."/>
            <person name="Huang G.-Y."/>
            <person name="Chen Z."/>
            <person name="Chen M.-D."/>
            <person name="Chen J.-L."/>
        </authorList>
    </citation>
    <scope>NUCLEOTIDE SEQUENCE [LARGE SCALE MRNA] (ISOFORM 1)</scope>
    <source>
        <tissue>Hypothalamus</tissue>
    </source>
</reference>
<reference key="2">
    <citation type="journal article" date="2004" name="Nat. Genet.">
        <title>Complete sequencing and characterization of 21,243 full-length human cDNAs.</title>
        <authorList>
            <person name="Ota T."/>
            <person name="Suzuki Y."/>
            <person name="Nishikawa T."/>
            <person name="Otsuki T."/>
            <person name="Sugiyama T."/>
            <person name="Irie R."/>
            <person name="Wakamatsu A."/>
            <person name="Hayashi K."/>
            <person name="Sato H."/>
            <person name="Nagai K."/>
            <person name="Kimura K."/>
            <person name="Makita H."/>
            <person name="Sekine M."/>
            <person name="Obayashi M."/>
            <person name="Nishi T."/>
            <person name="Shibahara T."/>
            <person name="Tanaka T."/>
            <person name="Ishii S."/>
            <person name="Yamamoto J."/>
            <person name="Saito K."/>
            <person name="Kawai Y."/>
            <person name="Isono Y."/>
            <person name="Nakamura Y."/>
            <person name="Nagahari K."/>
            <person name="Murakami K."/>
            <person name="Yasuda T."/>
            <person name="Iwayanagi T."/>
            <person name="Wagatsuma M."/>
            <person name="Shiratori A."/>
            <person name="Sudo H."/>
            <person name="Hosoiri T."/>
            <person name="Kaku Y."/>
            <person name="Kodaira H."/>
            <person name="Kondo H."/>
            <person name="Sugawara M."/>
            <person name="Takahashi M."/>
            <person name="Kanda K."/>
            <person name="Yokoi T."/>
            <person name="Furuya T."/>
            <person name="Kikkawa E."/>
            <person name="Omura Y."/>
            <person name="Abe K."/>
            <person name="Kamihara K."/>
            <person name="Katsuta N."/>
            <person name="Sato K."/>
            <person name="Tanikawa M."/>
            <person name="Yamazaki M."/>
            <person name="Ninomiya K."/>
            <person name="Ishibashi T."/>
            <person name="Yamashita H."/>
            <person name="Murakawa K."/>
            <person name="Fujimori K."/>
            <person name="Tanai H."/>
            <person name="Kimata M."/>
            <person name="Watanabe M."/>
            <person name="Hiraoka S."/>
            <person name="Chiba Y."/>
            <person name="Ishida S."/>
            <person name="Ono Y."/>
            <person name="Takiguchi S."/>
            <person name="Watanabe S."/>
            <person name="Yosida M."/>
            <person name="Hotuta T."/>
            <person name="Kusano J."/>
            <person name="Kanehori K."/>
            <person name="Takahashi-Fujii A."/>
            <person name="Hara H."/>
            <person name="Tanase T.-O."/>
            <person name="Nomura Y."/>
            <person name="Togiya S."/>
            <person name="Komai F."/>
            <person name="Hara R."/>
            <person name="Takeuchi K."/>
            <person name="Arita M."/>
            <person name="Imose N."/>
            <person name="Musashino K."/>
            <person name="Yuuki H."/>
            <person name="Oshima A."/>
            <person name="Sasaki N."/>
            <person name="Aotsuka S."/>
            <person name="Yoshikawa Y."/>
            <person name="Matsunawa H."/>
            <person name="Ichihara T."/>
            <person name="Shiohata N."/>
            <person name="Sano S."/>
            <person name="Moriya S."/>
            <person name="Momiyama H."/>
            <person name="Satoh N."/>
            <person name="Takami S."/>
            <person name="Terashima Y."/>
            <person name="Suzuki O."/>
            <person name="Nakagawa S."/>
            <person name="Senoh A."/>
            <person name="Mizoguchi H."/>
            <person name="Goto Y."/>
            <person name="Shimizu F."/>
            <person name="Wakebe H."/>
            <person name="Hishigaki H."/>
            <person name="Watanabe T."/>
            <person name="Sugiyama A."/>
            <person name="Takemoto M."/>
            <person name="Kawakami B."/>
            <person name="Yamazaki M."/>
            <person name="Watanabe K."/>
            <person name="Kumagai A."/>
            <person name="Itakura S."/>
            <person name="Fukuzumi Y."/>
            <person name="Fujimori Y."/>
            <person name="Komiyama M."/>
            <person name="Tashiro H."/>
            <person name="Tanigami A."/>
            <person name="Fujiwara T."/>
            <person name="Ono T."/>
            <person name="Yamada K."/>
            <person name="Fujii Y."/>
            <person name="Ozaki K."/>
            <person name="Hirao M."/>
            <person name="Ohmori Y."/>
            <person name="Kawabata A."/>
            <person name="Hikiji T."/>
            <person name="Kobatake N."/>
            <person name="Inagaki H."/>
            <person name="Ikema Y."/>
            <person name="Okamoto S."/>
            <person name="Okitani R."/>
            <person name="Kawakami T."/>
            <person name="Noguchi S."/>
            <person name="Itoh T."/>
            <person name="Shigeta K."/>
            <person name="Senba T."/>
            <person name="Matsumura K."/>
            <person name="Nakajima Y."/>
            <person name="Mizuno T."/>
            <person name="Morinaga M."/>
            <person name="Sasaki M."/>
            <person name="Togashi T."/>
            <person name="Oyama M."/>
            <person name="Hata H."/>
            <person name="Watanabe M."/>
            <person name="Komatsu T."/>
            <person name="Mizushima-Sugano J."/>
            <person name="Satoh T."/>
            <person name="Shirai Y."/>
            <person name="Takahashi Y."/>
            <person name="Nakagawa K."/>
            <person name="Okumura K."/>
            <person name="Nagase T."/>
            <person name="Nomura N."/>
            <person name="Kikuchi H."/>
            <person name="Masuho Y."/>
            <person name="Yamashita R."/>
            <person name="Nakai K."/>
            <person name="Yada T."/>
            <person name="Nakamura Y."/>
            <person name="Ohara O."/>
            <person name="Isogai T."/>
            <person name="Sugano S."/>
        </authorList>
    </citation>
    <scope>NUCLEOTIDE SEQUENCE [LARGE SCALE MRNA] (ISOFORM 1)</scope>
</reference>
<reference key="3">
    <citation type="submission" date="2004-06" db="EMBL/GenBank/DDBJ databases">
        <title>Cloning of human full open reading frames in Gateway(TM) system entry vector (pDONR201).</title>
        <authorList>
            <person name="Ebert L."/>
            <person name="Schick M."/>
            <person name="Neubert P."/>
            <person name="Schatten R."/>
            <person name="Henze S."/>
            <person name="Korn B."/>
        </authorList>
    </citation>
    <scope>NUCLEOTIDE SEQUENCE [LARGE SCALE MRNA] (ISOFORM 1)</scope>
</reference>
<reference key="4">
    <citation type="journal article" date="2004" name="Genome Res.">
        <title>The status, quality, and expansion of the NIH full-length cDNA project: the Mammalian Gene Collection (MGC).</title>
        <authorList>
            <consortium name="The MGC Project Team"/>
        </authorList>
    </citation>
    <scope>NUCLEOTIDE SEQUENCE [LARGE SCALE MRNA] (ISOFORMS 1 AND 2)</scope>
    <source>
        <tissue>Placenta</tissue>
        <tissue>Uterus</tissue>
    </source>
</reference>
<reference key="5">
    <citation type="submission" date="1999-08" db="EMBL/GenBank/DDBJ databases">
        <authorList>
            <person name="Qin B.M."/>
            <person name="Sheng H."/>
            <person name="Liu B."/>
            <person name="Zhao B."/>
            <person name="Liu Y.Q."/>
            <person name="Wang X.Y."/>
            <person name="Zhang Q."/>
            <person name="Song L."/>
            <person name="Liu B.H."/>
            <person name="Lu H."/>
            <person name="Xu H.S."/>
            <person name="Zheng W.Y."/>
            <person name="Gong J."/>
            <person name="Hui R.T."/>
        </authorList>
    </citation>
    <scope>NUCLEOTIDE SEQUENCE [LARGE SCALE MRNA] OF 72-261 (ISOFORM 1)</scope>
    <source>
        <tissue>Aorta</tissue>
    </source>
</reference>
<reference key="6">
    <citation type="journal article" date="2011" name="BMC Syst. Biol.">
        <title>Initial characterization of the human central proteome.</title>
        <authorList>
            <person name="Burkard T.R."/>
            <person name="Planyavsky M."/>
            <person name="Kaupe I."/>
            <person name="Breitwieser F.P."/>
            <person name="Buerckstuemmer T."/>
            <person name="Bennett K.L."/>
            <person name="Superti-Furga G."/>
            <person name="Colinge J."/>
        </authorList>
    </citation>
    <scope>IDENTIFICATION BY MASS SPECTROMETRY [LARGE SCALE ANALYSIS]</scope>
</reference>
<reference key="7">
    <citation type="journal article" date="2005" name="J. Mol. Biol.">
        <title>Crystal structure of human E1 enzyme and its complex with a substrate analog reveals the mechanism of its phosphatase/enolase activity.</title>
        <authorList>
            <person name="Wang H."/>
            <person name="Pang H."/>
            <person name="Bartlam M."/>
            <person name="Rao Z."/>
        </authorList>
    </citation>
    <scope>X-RAY CRYSTALLOGRAPHY (1.7 ANGSTROMS) IN COMPLEX WITH MAGNESIUM AND SUBSTRATE ANALOG</scope>
    <scope>FUNCTION</scope>
    <scope>SUBUNIT</scope>
</reference>
<comment type="function">
    <text evidence="1 2">Bifunctional enzyme that catalyzes the enolization of 2,3-diketo-5-methylthiopentyl-1-phosphate (DK-MTP-1-P) into the intermediate 2-hydroxy-3-keto-5-methylthiopentenyl-1-phosphate (HK-MTPenyl-1-P), which is then dephosphorylated to form the acireductone 1,2-dihydroxy-3-keto-5-methylthiopentene (DHK-MTPene).</text>
</comment>
<comment type="catalytic activity">
    <reaction evidence="1">
        <text>5-methylsulfanyl-2,3-dioxopentyl phosphate + H2O = 1,2-dihydroxy-5-(methylsulfanyl)pent-1-en-3-one + phosphate</text>
        <dbReference type="Rhea" id="RHEA:21700"/>
        <dbReference type="ChEBI" id="CHEBI:15377"/>
        <dbReference type="ChEBI" id="CHEBI:43474"/>
        <dbReference type="ChEBI" id="CHEBI:49252"/>
        <dbReference type="ChEBI" id="CHEBI:58828"/>
        <dbReference type="EC" id="3.1.3.77"/>
    </reaction>
</comment>
<comment type="cofactor">
    <cofactor>
        <name>Mg(2+)</name>
        <dbReference type="ChEBI" id="CHEBI:18420"/>
    </cofactor>
    <text>Binds 1 Mg(2+) ion per subunit.</text>
</comment>
<comment type="pathway">
    <text evidence="1">Amino-acid biosynthesis; L-methionine biosynthesis via salvage pathway; L-methionine from S-methyl-5-thio-alpha-D-ribose 1-phosphate: step 3/6.</text>
</comment>
<comment type="pathway">
    <text evidence="1">Amino-acid biosynthesis; L-methionine biosynthesis via salvage pathway; L-methionine from S-methyl-5-thio-alpha-D-ribose 1-phosphate: step 4/6.</text>
</comment>
<comment type="subunit">
    <text evidence="1 2">Monomer.</text>
</comment>
<comment type="interaction">
    <interactant intactId="EBI-726969">
        <id>Q9UHY7</id>
    </interactant>
    <interactant intactId="EBI-2130266">
        <id>Q9H4P4</id>
        <label>RNF41</label>
    </interactant>
    <organismsDiffer>false</organismsDiffer>
    <experiments>10</experiments>
</comment>
<comment type="interaction">
    <interactant intactId="EBI-726969">
        <id>Q9UHY7</id>
    </interactant>
    <interactant intactId="EBI-8489342">
        <id>P59817</id>
        <label>ZNF280A</label>
    </interactant>
    <organismsDiffer>false</organismsDiffer>
    <experiments>5</experiments>
</comment>
<comment type="subcellular location">
    <subcellularLocation>
        <location evidence="1">Cytoplasm</location>
    </subcellularLocation>
    <subcellularLocation>
        <location evidence="1">Nucleus</location>
    </subcellularLocation>
</comment>
<comment type="alternative products">
    <event type="alternative splicing"/>
    <isoform>
        <id>Q9UHY7-1</id>
        <name>1</name>
        <sequence type="displayed"/>
    </isoform>
    <isoform>
        <id>Q9UHY7-2</id>
        <name>2</name>
        <sequence type="described" ref="VSP_021160"/>
    </isoform>
</comment>
<comment type="similarity">
    <text evidence="1">Belongs to the HAD-like hydrolase superfamily. MasA/MtnC family.</text>
</comment>
<comment type="sequence caution" evidence="4">
    <conflict type="frameshift">
        <sequence resource="EMBL-CDS" id="AAQ13671"/>
    </conflict>
</comment>
<accession>Q9UHY7</accession>
<accession>Q7Z4C5</accession>
<accession>Q9BVC2</accession>
<sequence>MVVLSVPAEVTVILLDIEGTTTPIAFVKDILFPYIEENVKEYLQTHWEEEECQQDVSLLRKQAEEDAHLDGAVPIPAASGNGVDDLQQMIQAVVDNVCWQMSLDRKTTALKQLQGHMWRAAFTAGRMKAEFFADVVPAVRKWREAGMKVYIYSSGSVEAQKLLFGHSTEGDILELVDGHFDTKIGHKVESESYRKIADSIGCSTNNILFLTDVTREASAAEEADVHVAVVVRPGNAGLTDDEKTYYSLITSFSELYLPSST</sequence>